<dbReference type="EC" id="3.6.5.-" evidence="1"/>
<dbReference type="EMBL" id="FM211192">
    <property type="protein sequence ID" value="CAR71559.1"/>
    <property type="molecule type" value="Genomic_DNA"/>
</dbReference>
<dbReference type="SMR" id="B8ZRN3"/>
<dbReference type="KEGG" id="mlb:MLBr01465"/>
<dbReference type="HOGENOM" id="CLU_011747_2_1_11"/>
<dbReference type="Proteomes" id="UP000006900">
    <property type="component" value="Chromosome"/>
</dbReference>
<dbReference type="GO" id="GO:0005737">
    <property type="term" value="C:cytoplasm"/>
    <property type="evidence" value="ECO:0007669"/>
    <property type="project" value="UniProtKB-SubCell"/>
</dbReference>
<dbReference type="GO" id="GO:0005525">
    <property type="term" value="F:GTP binding"/>
    <property type="evidence" value="ECO:0007669"/>
    <property type="project" value="UniProtKB-UniRule"/>
</dbReference>
<dbReference type="GO" id="GO:0003924">
    <property type="term" value="F:GTPase activity"/>
    <property type="evidence" value="ECO:0007669"/>
    <property type="project" value="UniProtKB-UniRule"/>
</dbReference>
<dbReference type="GO" id="GO:0000287">
    <property type="term" value="F:magnesium ion binding"/>
    <property type="evidence" value="ECO:0007669"/>
    <property type="project" value="InterPro"/>
</dbReference>
<dbReference type="GO" id="GO:0042254">
    <property type="term" value="P:ribosome biogenesis"/>
    <property type="evidence" value="ECO:0007669"/>
    <property type="project" value="UniProtKB-UniRule"/>
</dbReference>
<dbReference type="CDD" id="cd01898">
    <property type="entry name" value="Obg"/>
    <property type="match status" value="1"/>
</dbReference>
<dbReference type="FunFam" id="2.70.210.12:FF:000001">
    <property type="entry name" value="GTPase Obg"/>
    <property type="match status" value="1"/>
</dbReference>
<dbReference type="Gene3D" id="3.30.300.350">
    <property type="entry name" value="GTP-binding protein OBG, C-terminal domain"/>
    <property type="match status" value="1"/>
</dbReference>
<dbReference type="Gene3D" id="2.70.210.12">
    <property type="entry name" value="GTP1/OBG domain"/>
    <property type="match status" value="1"/>
</dbReference>
<dbReference type="Gene3D" id="3.40.50.300">
    <property type="entry name" value="P-loop containing nucleotide triphosphate hydrolases"/>
    <property type="match status" value="1"/>
</dbReference>
<dbReference type="HAMAP" id="MF_01454">
    <property type="entry name" value="GTPase_Obg"/>
    <property type="match status" value="1"/>
</dbReference>
<dbReference type="InterPro" id="IPR031167">
    <property type="entry name" value="G_OBG"/>
</dbReference>
<dbReference type="InterPro" id="IPR006073">
    <property type="entry name" value="GTP-bd"/>
</dbReference>
<dbReference type="InterPro" id="IPR014100">
    <property type="entry name" value="GTP-bd_Obg/CgtA"/>
</dbReference>
<dbReference type="InterPro" id="IPR036346">
    <property type="entry name" value="GTP-bd_prot_GTP1/OBG_C_sf"/>
</dbReference>
<dbReference type="InterPro" id="IPR006074">
    <property type="entry name" value="GTP1-OBG_CS"/>
</dbReference>
<dbReference type="InterPro" id="IPR006169">
    <property type="entry name" value="GTP1_OBG_dom"/>
</dbReference>
<dbReference type="InterPro" id="IPR036726">
    <property type="entry name" value="GTP1_OBG_dom_sf"/>
</dbReference>
<dbReference type="InterPro" id="IPR045086">
    <property type="entry name" value="OBG_GTPase"/>
</dbReference>
<dbReference type="InterPro" id="IPR015349">
    <property type="entry name" value="OCT_dom"/>
</dbReference>
<dbReference type="InterPro" id="IPR027417">
    <property type="entry name" value="P-loop_NTPase"/>
</dbReference>
<dbReference type="NCBIfam" id="TIGR02729">
    <property type="entry name" value="Obg_CgtA"/>
    <property type="match status" value="1"/>
</dbReference>
<dbReference type="NCBIfam" id="TIGR03595">
    <property type="entry name" value="Obg_CgtA_exten"/>
    <property type="match status" value="1"/>
</dbReference>
<dbReference type="NCBIfam" id="NF008954">
    <property type="entry name" value="PRK12296.1"/>
    <property type="match status" value="1"/>
</dbReference>
<dbReference type="NCBIfam" id="NF008955">
    <property type="entry name" value="PRK12297.1"/>
    <property type="match status" value="1"/>
</dbReference>
<dbReference type="NCBIfam" id="NF008956">
    <property type="entry name" value="PRK12299.1"/>
    <property type="match status" value="1"/>
</dbReference>
<dbReference type="PANTHER" id="PTHR11702">
    <property type="entry name" value="DEVELOPMENTALLY REGULATED GTP-BINDING PROTEIN-RELATED"/>
    <property type="match status" value="1"/>
</dbReference>
<dbReference type="PANTHER" id="PTHR11702:SF31">
    <property type="entry name" value="MITOCHONDRIAL RIBOSOME-ASSOCIATED GTPASE 2"/>
    <property type="match status" value="1"/>
</dbReference>
<dbReference type="Pfam" id="PF09269">
    <property type="entry name" value="DUF1967"/>
    <property type="match status" value="1"/>
</dbReference>
<dbReference type="Pfam" id="PF01018">
    <property type="entry name" value="GTP1_OBG"/>
    <property type="match status" value="1"/>
</dbReference>
<dbReference type="Pfam" id="PF01926">
    <property type="entry name" value="MMR_HSR1"/>
    <property type="match status" value="1"/>
</dbReference>
<dbReference type="PRINTS" id="PR00326">
    <property type="entry name" value="GTP1OBG"/>
</dbReference>
<dbReference type="SUPFAM" id="SSF102741">
    <property type="entry name" value="Obg GTP-binding protein C-terminal domain"/>
    <property type="match status" value="1"/>
</dbReference>
<dbReference type="SUPFAM" id="SSF82051">
    <property type="entry name" value="Obg GTP-binding protein N-terminal domain"/>
    <property type="match status" value="1"/>
</dbReference>
<dbReference type="SUPFAM" id="SSF52540">
    <property type="entry name" value="P-loop containing nucleoside triphosphate hydrolases"/>
    <property type="match status" value="1"/>
</dbReference>
<dbReference type="PROSITE" id="PS51710">
    <property type="entry name" value="G_OBG"/>
    <property type="match status" value="1"/>
</dbReference>
<dbReference type="PROSITE" id="PS00905">
    <property type="entry name" value="GTP1_OBG"/>
    <property type="match status" value="1"/>
</dbReference>
<dbReference type="PROSITE" id="PS51883">
    <property type="entry name" value="OBG"/>
    <property type="match status" value="1"/>
</dbReference>
<dbReference type="PROSITE" id="PS51881">
    <property type="entry name" value="OCT"/>
    <property type="match status" value="1"/>
</dbReference>
<evidence type="ECO:0000255" key="1">
    <source>
        <dbReference type="HAMAP-Rule" id="MF_01454"/>
    </source>
</evidence>
<evidence type="ECO:0000255" key="2">
    <source>
        <dbReference type="PROSITE-ProRule" id="PRU01229"/>
    </source>
</evidence>
<evidence type="ECO:0000255" key="3">
    <source>
        <dbReference type="PROSITE-ProRule" id="PRU01231"/>
    </source>
</evidence>
<evidence type="ECO:0000256" key="4">
    <source>
        <dbReference type="SAM" id="MobiDB-lite"/>
    </source>
</evidence>
<gene>
    <name evidence="1" type="primary">obg</name>
    <name type="ordered locus">MLBr01465</name>
</gene>
<name>OBG_MYCLB</name>
<proteinExistence type="inferred from homology"/>
<keyword id="KW-0963">Cytoplasm</keyword>
<keyword id="KW-0342">GTP-binding</keyword>
<keyword id="KW-0378">Hydrolase</keyword>
<keyword id="KW-0460">Magnesium</keyword>
<keyword id="KW-0479">Metal-binding</keyword>
<keyword id="KW-0547">Nucleotide-binding</keyword>
<sequence length="479" mass="50366">MPRFVDRVVIHTWAGSGGNGCASIHRSKFKPLGGPDGGNGGRGGSVVFVVDPHVHTLLDFHFRPHITAPSGKQGMGNNRDGAAGADLEVKVPDGTVVLDEDGRLLADLVGAGTRFQAAAGGRGGLGNAALASRTRKVPGFALLGEQGESRDLTLELKSVADVGLIGFPSAGKSSLVSVISAAKPKIADYPFTTLVPNLGVVSVGEHAFTVADVPGLIPGASAGRGLGLDFLRHIERCAVLVHVVDCTSVEPGRDPILDIAALEAELAAYTPTLQGDTTLGDFAERPRAVVLNKIDVPDARELAEFVCDNIAAERGWPVFSVSTVTRENLQSLIFGLWQMISAYHAARSEPAPGRSLIRPVPVDDSGFTVEPDGQGGFVVTGTRPERWIHQTNFDNAEAVGYLADRLARLGVEDELLRVGAQPGCTVSIGGMTFDWEPQKPAGHPVAMSGRGTDARLESTDPVGTAERKVARHQRHKHGG</sequence>
<feature type="chain" id="PRO_0000386055" description="GTPase Obg">
    <location>
        <begin position="1"/>
        <end position="479"/>
    </location>
</feature>
<feature type="domain" description="Obg" evidence="3">
    <location>
        <begin position="2"/>
        <end position="159"/>
    </location>
</feature>
<feature type="domain" description="OBG-type G" evidence="1">
    <location>
        <begin position="160"/>
        <end position="341"/>
    </location>
</feature>
<feature type="domain" description="OCT" evidence="2">
    <location>
        <begin position="359"/>
        <end position="437"/>
    </location>
</feature>
<feature type="region of interest" description="Disordered" evidence="4">
    <location>
        <begin position="438"/>
        <end position="479"/>
    </location>
</feature>
<feature type="compositionally biased region" description="Basic residues" evidence="4">
    <location>
        <begin position="469"/>
        <end position="479"/>
    </location>
</feature>
<feature type="binding site" evidence="1">
    <location>
        <begin position="166"/>
        <end position="173"/>
    </location>
    <ligand>
        <name>GTP</name>
        <dbReference type="ChEBI" id="CHEBI:37565"/>
    </ligand>
</feature>
<feature type="binding site" evidence="1">
    <location>
        <position position="173"/>
    </location>
    <ligand>
        <name>Mg(2+)</name>
        <dbReference type="ChEBI" id="CHEBI:18420"/>
    </ligand>
</feature>
<feature type="binding site" evidence="1">
    <location>
        <begin position="191"/>
        <end position="195"/>
    </location>
    <ligand>
        <name>GTP</name>
        <dbReference type="ChEBI" id="CHEBI:37565"/>
    </ligand>
</feature>
<feature type="binding site" evidence="1">
    <location>
        <position position="193"/>
    </location>
    <ligand>
        <name>Mg(2+)</name>
        <dbReference type="ChEBI" id="CHEBI:18420"/>
    </ligand>
</feature>
<feature type="binding site" evidence="1">
    <location>
        <begin position="212"/>
        <end position="215"/>
    </location>
    <ligand>
        <name>GTP</name>
        <dbReference type="ChEBI" id="CHEBI:37565"/>
    </ligand>
</feature>
<feature type="binding site" evidence="1">
    <location>
        <begin position="292"/>
        <end position="295"/>
    </location>
    <ligand>
        <name>GTP</name>
        <dbReference type="ChEBI" id="CHEBI:37565"/>
    </ligand>
</feature>
<feature type="binding site" evidence="1">
    <location>
        <begin position="322"/>
        <end position="324"/>
    </location>
    <ligand>
        <name>GTP</name>
        <dbReference type="ChEBI" id="CHEBI:37565"/>
    </ligand>
</feature>
<reference key="1">
    <citation type="journal article" date="2009" name="Nat. Genet.">
        <title>Comparative genomic and phylogeographic analysis of Mycobacterium leprae.</title>
        <authorList>
            <person name="Monot M."/>
            <person name="Honore N."/>
            <person name="Garnier T."/>
            <person name="Zidane N."/>
            <person name="Sherafi D."/>
            <person name="Paniz-Mondolfi A."/>
            <person name="Matsuoka M."/>
            <person name="Taylor G.M."/>
            <person name="Donoghue H.D."/>
            <person name="Bouwman A."/>
            <person name="Mays S."/>
            <person name="Watson C."/>
            <person name="Lockwood D."/>
            <person name="Khamispour A."/>
            <person name="Dowlati Y."/>
            <person name="Jianping S."/>
            <person name="Rea T.H."/>
            <person name="Vera-Cabrera L."/>
            <person name="Stefani M.M."/>
            <person name="Banu S."/>
            <person name="Macdonald M."/>
            <person name="Sapkota B.R."/>
            <person name="Spencer J.S."/>
            <person name="Thomas J."/>
            <person name="Harshman K."/>
            <person name="Singh P."/>
            <person name="Busso P."/>
            <person name="Gattiker A."/>
            <person name="Rougemont J."/>
            <person name="Brennan P.J."/>
            <person name="Cole S.T."/>
        </authorList>
    </citation>
    <scope>NUCLEOTIDE SEQUENCE [LARGE SCALE GENOMIC DNA]</scope>
    <source>
        <strain>Br4923</strain>
    </source>
</reference>
<accession>B8ZRN3</accession>
<protein>
    <recommendedName>
        <fullName evidence="1">GTPase Obg</fullName>
        <ecNumber evidence="1">3.6.5.-</ecNumber>
    </recommendedName>
    <alternativeName>
        <fullName evidence="1">GTP-binding protein Obg</fullName>
    </alternativeName>
</protein>
<organism>
    <name type="scientific">Mycobacterium leprae (strain Br4923)</name>
    <dbReference type="NCBI Taxonomy" id="561304"/>
    <lineage>
        <taxon>Bacteria</taxon>
        <taxon>Bacillati</taxon>
        <taxon>Actinomycetota</taxon>
        <taxon>Actinomycetes</taxon>
        <taxon>Mycobacteriales</taxon>
        <taxon>Mycobacteriaceae</taxon>
        <taxon>Mycobacterium</taxon>
    </lineage>
</organism>
<comment type="function">
    <text evidence="1">An essential GTPase which binds GTP, GDP and possibly (p)ppGpp with moderate affinity, with high nucleotide exchange rates and a fairly low GTP hydrolysis rate. Plays a role in control of the cell cycle, stress response, ribosome biogenesis and in those bacteria that undergo differentiation, in morphogenesis control.</text>
</comment>
<comment type="cofactor">
    <cofactor evidence="1">
        <name>Mg(2+)</name>
        <dbReference type="ChEBI" id="CHEBI:18420"/>
    </cofactor>
</comment>
<comment type="subunit">
    <text evidence="1">Monomer.</text>
</comment>
<comment type="subcellular location">
    <subcellularLocation>
        <location evidence="1">Cytoplasm</location>
    </subcellularLocation>
</comment>
<comment type="similarity">
    <text evidence="1">Belongs to the TRAFAC class OBG-HflX-like GTPase superfamily. OBG GTPase family.</text>
</comment>